<feature type="chain" id="PRO_0000165945" description="Purine catabolism regulatory protein">
    <location>
        <begin position="1"/>
        <end position="531"/>
    </location>
</feature>
<protein>
    <recommendedName>
        <fullName>Purine catabolism regulatory protein</fullName>
    </recommendedName>
</protein>
<comment type="function">
    <text evidence="1 2">Activates the expression of pucFG, pucH, pucI, pucJKLM and guaD, while it represses pucABCDE and its own expression.</text>
</comment>
<comment type="induction">
    <text>Expression is very low in excess nitrogen (glutamate plus ammonia) and is induced during limiting-nitrogen conditions (glutamate). Expression slightly decreases when allantoin is added during limiting-nitrogen conditions.</text>
</comment>
<comment type="similarity">
    <text evidence="3">Belongs to the CdaR family.</text>
</comment>
<accession>O32138</accession>
<gene>
    <name type="primary">pucR</name>
    <name type="synonym">yunI</name>
    <name type="ordered locus">BSU32420</name>
</gene>
<sequence length="531" mass="60514">MNILDVMKIPAFENANLIAGKAGGEREVQHVNMMDAPDIVDFLHKNELLVTTAYHLKDHPHQLSELIRQMAKRGCAGLGIKTKRYLEDIPKEIIELADSYAFPIIELPEHIRLGDIVNATLSHILDMRSNELQQAIYAHKKFTNHIMSGKGLQSLLKKVSDILQLPVLLLDQHAKMLSASHQISVETEKLKGTLNTVSGPFFTCFSTISDQKTYSVLPIYNHEKNCGYLLIPDMVQAGDKGLILTIEQAANVISFELLKENALKQFSRRARNEFFNNFIERTFSSDDEIKNRAKEFKLRWDQKYMCIAGKLDRNDESISFTENQLASDSVFEFLEGELSAFPFPPHFFMKGNVGIILIEATDSWSEMHASVISFLEQFQTQVSAQFKRTVSFGISNICQKLIDVPDAFTEASDALQSGHLSRSTAFIQVYHAKDVPELLRLLPVEDLKKFYNSTLQSLAEKQQEDQSLLHTLSVYLETHCQISETAKRLYVHRNTVIYRLEKCEELLGKSLKDPETTMRLRLALRMQRLIS</sequence>
<name>PUCR_BACSU</name>
<evidence type="ECO:0000269" key="1">
    <source>
    </source>
</evidence>
<evidence type="ECO:0000269" key="2">
    <source>
    </source>
</evidence>
<evidence type="ECO:0000305" key="3"/>
<organism>
    <name type="scientific">Bacillus subtilis (strain 168)</name>
    <dbReference type="NCBI Taxonomy" id="224308"/>
    <lineage>
        <taxon>Bacteria</taxon>
        <taxon>Bacillati</taxon>
        <taxon>Bacillota</taxon>
        <taxon>Bacilli</taxon>
        <taxon>Bacillales</taxon>
        <taxon>Bacillaceae</taxon>
        <taxon>Bacillus</taxon>
    </lineage>
</organism>
<reference key="1">
    <citation type="journal article" date="1997" name="Nature">
        <title>The complete genome sequence of the Gram-positive bacterium Bacillus subtilis.</title>
        <authorList>
            <person name="Kunst F."/>
            <person name="Ogasawara N."/>
            <person name="Moszer I."/>
            <person name="Albertini A.M."/>
            <person name="Alloni G."/>
            <person name="Azevedo V."/>
            <person name="Bertero M.G."/>
            <person name="Bessieres P."/>
            <person name="Bolotin A."/>
            <person name="Borchert S."/>
            <person name="Borriss R."/>
            <person name="Boursier L."/>
            <person name="Brans A."/>
            <person name="Braun M."/>
            <person name="Brignell S.C."/>
            <person name="Bron S."/>
            <person name="Brouillet S."/>
            <person name="Bruschi C.V."/>
            <person name="Caldwell B."/>
            <person name="Capuano V."/>
            <person name="Carter N.M."/>
            <person name="Choi S.-K."/>
            <person name="Codani J.-J."/>
            <person name="Connerton I.F."/>
            <person name="Cummings N.J."/>
            <person name="Daniel R.A."/>
            <person name="Denizot F."/>
            <person name="Devine K.M."/>
            <person name="Duesterhoeft A."/>
            <person name="Ehrlich S.D."/>
            <person name="Emmerson P.T."/>
            <person name="Entian K.-D."/>
            <person name="Errington J."/>
            <person name="Fabret C."/>
            <person name="Ferrari E."/>
            <person name="Foulger D."/>
            <person name="Fritz C."/>
            <person name="Fujita M."/>
            <person name="Fujita Y."/>
            <person name="Fuma S."/>
            <person name="Galizzi A."/>
            <person name="Galleron N."/>
            <person name="Ghim S.-Y."/>
            <person name="Glaser P."/>
            <person name="Goffeau A."/>
            <person name="Golightly E.J."/>
            <person name="Grandi G."/>
            <person name="Guiseppi G."/>
            <person name="Guy B.J."/>
            <person name="Haga K."/>
            <person name="Haiech J."/>
            <person name="Harwood C.R."/>
            <person name="Henaut A."/>
            <person name="Hilbert H."/>
            <person name="Holsappel S."/>
            <person name="Hosono S."/>
            <person name="Hullo M.-F."/>
            <person name="Itaya M."/>
            <person name="Jones L.-M."/>
            <person name="Joris B."/>
            <person name="Karamata D."/>
            <person name="Kasahara Y."/>
            <person name="Klaerr-Blanchard M."/>
            <person name="Klein C."/>
            <person name="Kobayashi Y."/>
            <person name="Koetter P."/>
            <person name="Koningstein G."/>
            <person name="Krogh S."/>
            <person name="Kumano M."/>
            <person name="Kurita K."/>
            <person name="Lapidus A."/>
            <person name="Lardinois S."/>
            <person name="Lauber J."/>
            <person name="Lazarevic V."/>
            <person name="Lee S.-M."/>
            <person name="Levine A."/>
            <person name="Liu H."/>
            <person name="Masuda S."/>
            <person name="Mauel C."/>
            <person name="Medigue C."/>
            <person name="Medina N."/>
            <person name="Mellado R.P."/>
            <person name="Mizuno M."/>
            <person name="Moestl D."/>
            <person name="Nakai S."/>
            <person name="Noback M."/>
            <person name="Noone D."/>
            <person name="O'Reilly M."/>
            <person name="Ogawa K."/>
            <person name="Ogiwara A."/>
            <person name="Oudega B."/>
            <person name="Park S.-H."/>
            <person name="Parro V."/>
            <person name="Pohl T.M."/>
            <person name="Portetelle D."/>
            <person name="Porwollik S."/>
            <person name="Prescott A.M."/>
            <person name="Presecan E."/>
            <person name="Pujic P."/>
            <person name="Purnelle B."/>
            <person name="Rapoport G."/>
            <person name="Rey M."/>
            <person name="Reynolds S."/>
            <person name="Rieger M."/>
            <person name="Rivolta C."/>
            <person name="Rocha E."/>
            <person name="Roche B."/>
            <person name="Rose M."/>
            <person name="Sadaie Y."/>
            <person name="Sato T."/>
            <person name="Scanlan E."/>
            <person name="Schleich S."/>
            <person name="Schroeter R."/>
            <person name="Scoffone F."/>
            <person name="Sekiguchi J."/>
            <person name="Sekowska A."/>
            <person name="Seror S.J."/>
            <person name="Serror P."/>
            <person name="Shin B.-S."/>
            <person name="Soldo B."/>
            <person name="Sorokin A."/>
            <person name="Tacconi E."/>
            <person name="Takagi T."/>
            <person name="Takahashi H."/>
            <person name="Takemaru K."/>
            <person name="Takeuchi M."/>
            <person name="Tamakoshi A."/>
            <person name="Tanaka T."/>
            <person name="Terpstra P."/>
            <person name="Tognoni A."/>
            <person name="Tosato V."/>
            <person name="Uchiyama S."/>
            <person name="Vandenbol M."/>
            <person name="Vannier F."/>
            <person name="Vassarotti A."/>
            <person name="Viari A."/>
            <person name="Wambutt R."/>
            <person name="Wedler E."/>
            <person name="Wedler H."/>
            <person name="Weitzenegger T."/>
            <person name="Winters P."/>
            <person name="Wipat A."/>
            <person name="Yamamoto H."/>
            <person name="Yamane K."/>
            <person name="Yasumoto K."/>
            <person name="Yata K."/>
            <person name="Yoshida K."/>
            <person name="Yoshikawa H.-F."/>
            <person name="Zumstein E."/>
            <person name="Yoshikawa H."/>
            <person name="Danchin A."/>
        </authorList>
    </citation>
    <scope>NUCLEOTIDE SEQUENCE [LARGE SCALE GENOMIC DNA]</scope>
    <source>
        <strain>168</strain>
    </source>
</reference>
<reference key="2">
    <citation type="journal article" date="2001" name="J. Bacteriol.">
        <title>Functional analysis of 14 genes that constitute the purine catabolic pathway in Bacillus subtilis and evidence for a novel regulon controlled by the PucR transcription activator.</title>
        <authorList>
            <person name="Schultz A.C."/>
            <person name="Nygaard P."/>
            <person name="Saxild H.H."/>
        </authorList>
    </citation>
    <scope>FUNCTION</scope>
    <source>
        <strain>168</strain>
    </source>
</reference>
<reference key="3">
    <citation type="journal article" date="2002" name="J. Bacteriol.">
        <title>Transcription analysis of the Bacillus subtilis PucR regulon and identification of a cis-acting sequence required for PucR-regulated expression of genes involved in purine catabolism.</title>
        <authorList>
            <person name="Beier L."/>
            <person name="Nygaard P."/>
            <person name="Jarmer H."/>
            <person name="Saxild H.H."/>
        </authorList>
    </citation>
    <scope>FUNCTION</scope>
    <source>
        <strain>168</strain>
    </source>
</reference>
<dbReference type="EMBL" id="AL009126">
    <property type="protein sequence ID" value="CAB15232.1"/>
    <property type="molecule type" value="Genomic_DNA"/>
</dbReference>
<dbReference type="PIR" id="D70016">
    <property type="entry name" value="D70016"/>
</dbReference>
<dbReference type="RefSeq" id="NP_391122.1">
    <property type="nucleotide sequence ID" value="NC_000964.3"/>
</dbReference>
<dbReference type="RefSeq" id="WP_003244351.1">
    <property type="nucleotide sequence ID" value="NZ_OZ025638.1"/>
</dbReference>
<dbReference type="SMR" id="O32138"/>
<dbReference type="FunCoup" id="O32138">
    <property type="interactions" value="97"/>
</dbReference>
<dbReference type="STRING" id="224308.BSU32420"/>
<dbReference type="PaxDb" id="224308-BSU32420"/>
<dbReference type="EnsemblBacteria" id="CAB15232">
    <property type="protein sequence ID" value="CAB15232"/>
    <property type="gene ID" value="BSU_32420"/>
</dbReference>
<dbReference type="GeneID" id="937221"/>
<dbReference type="KEGG" id="bsu:BSU32420"/>
<dbReference type="PATRIC" id="fig|224308.179.peg.3509"/>
<dbReference type="eggNOG" id="COG2508">
    <property type="taxonomic scope" value="Bacteria"/>
</dbReference>
<dbReference type="InParanoid" id="O32138"/>
<dbReference type="OrthoDB" id="142218at2"/>
<dbReference type="PhylomeDB" id="O32138"/>
<dbReference type="BioCyc" id="BSUB:BSU32420-MONOMER"/>
<dbReference type="Proteomes" id="UP000001570">
    <property type="component" value="Chromosome"/>
</dbReference>
<dbReference type="GO" id="GO:0003677">
    <property type="term" value="F:DNA binding"/>
    <property type="evidence" value="ECO:0007669"/>
    <property type="project" value="UniProtKB-KW"/>
</dbReference>
<dbReference type="GO" id="GO:0003700">
    <property type="term" value="F:DNA-binding transcription factor activity"/>
    <property type="evidence" value="ECO:0000318"/>
    <property type="project" value="GO_Central"/>
</dbReference>
<dbReference type="GO" id="GO:0045893">
    <property type="term" value="P:positive regulation of DNA-templated transcription"/>
    <property type="evidence" value="ECO:0000318"/>
    <property type="project" value="GO_Central"/>
</dbReference>
<dbReference type="GO" id="GO:0006144">
    <property type="term" value="P:purine nucleobase metabolic process"/>
    <property type="evidence" value="ECO:0007669"/>
    <property type="project" value="UniProtKB-KW"/>
</dbReference>
<dbReference type="Gene3D" id="1.10.10.2840">
    <property type="entry name" value="PucR C-terminal helix-turn-helix domain"/>
    <property type="match status" value="1"/>
</dbReference>
<dbReference type="InterPro" id="IPR051448">
    <property type="entry name" value="CdaR-like_regulators"/>
</dbReference>
<dbReference type="InterPro" id="IPR041522">
    <property type="entry name" value="CdaR_GGDEF"/>
</dbReference>
<dbReference type="InterPro" id="IPR025736">
    <property type="entry name" value="PucR_C-HTH_dom"/>
</dbReference>
<dbReference type="InterPro" id="IPR042070">
    <property type="entry name" value="PucR_C-HTH_sf"/>
</dbReference>
<dbReference type="InterPro" id="IPR012914">
    <property type="entry name" value="PucR_dom"/>
</dbReference>
<dbReference type="PANTHER" id="PTHR33744">
    <property type="entry name" value="CARBOHYDRATE DIACID REGULATOR"/>
    <property type="match status" value="1"/>
</dbReference>
<dbReference type="PANTHER" id="PTHR33744:SF1">
    <property type="entry name" value="DNA-BINDING TRANSCRIPTIONAL ACTIVATOR ADER"/>
    <property type="match status" value="1"/>
</dbReference>
<dbReference type="Pfam" id="PF17853">
    <property type="entry name" value="GGDEF_2"/>
    <property type="match status" value="1"/>
</dbReference>
<dbReference type="Pfam" id="PF13556">
    <property type="entry name" value="HTH_30"/>
    <property type="match status" value="1"/>
</dbReference>
<dbReference type="Pfam" id="PF07905">
    <property type="entry name" value="PucR"/>
    <property type="match status" value="1"/>
</dbReference>
<keyword id="KW-0010">Activator</keyword>
<keyword id="KW-0238">DNA-binding</keyword>
<keyword id="KW-0659">Purine metabolism</keyword>
<keyword id="KW-1185">Reference proteome</keyword>
<keyword id="KW-0678">Repressor</keyword>
<keyword id="KW-0804">Transcription</keyword>
<keyword id="KW-0805">Transcription regulation</keyword>
<proteinExistence type="evidence at transcript level"/>